<name>SYY_DEHMC</name>
<reference key="1">
    <citation type="journal article" date="2005" name="Nat. Biotechnol.">
        <title>Genome sequence of the chlorinated compound-respiring bacterium Dehalococcoides species strain CBDB1.</title>
        <authorList>
            <person name="Kube M."/>
            <person name="Beck A."/>
            <person name="Zinder S.H."/>
            <person name="Kuhl H."/>
            <person name="Reinhardt R."/>
            <person name="Adrian L."/>
        </authorList>
    </citation>
    <scope>NUCLEOTIDE SEQUENCE [LARGE SCALE GENOMIC DNA]</scope>
    <source>
        <strain>CBDB1</strain>
    </source>
</reference>
<comment type="function">
    <text evidence="1">Catalyzes the attachment of tyrosine to tRNA(Tyr) in a two-step reaction: tyrosine is first activated by ATP to form Tyr-AMP and then transferred to the acceptor end of tRNA(Tyr).</text>
</comment>
<comment type="catalytic activity">
    <reaction evidence="1">
        <text>tRNA(Tyr) + L-tyrosine + ATP = L-tyrosyl-tRNA(Tyr) + AMP + diphosphate + H(+)</text>
        <dbReference type="Rhea" id="RHEA:10220"/>
        <dbReference type="Rhea" id="RHEA-COMP:9706"/>
        <dbReference type="Rhea" id="RHEA-COMP:9707"/>
        <dbReference type="ChEBI" id="CHEBI:15378"/>
        <dbReference type="ChEBI" id="CHEBI:30616"/>
        <dbReference type="ChEBI" id="CHEBI:33019"/>
        <dbReference type="ChEBI" id="CHEBI:58315"/>
        <dbReference type="ChEBI" id="CHEBI:78442"/>
        <dbReference type="ChEBI" id="CHEBI:78536"/>
        <dbReference type="ChEBI" id="CHEBI:456215"/>
        <dbReference type="EC" id="6.1.1.1"/>
    </reaction>
</comment>
<comment type="subunit">
    <text evidence="1">Homodimer.</text>
</comment>
<comment type="subcellular location">
    <subcellularLocation>
        <location evidence="1">Cytoplasm</location>
    </subcellularLocation>
</comment>
<comment type="similarity">
    <text evidence="1">Belongs to the class-I aminoacyl-tRNA synthetase family. TyrS type 2 subfamily.</text>
</comment>
<feature type="chain" id="PRO_0000236714" description="Tyrosine--tRNA ligase">
    <location>
        <begin position="1"/>
        <end position="396"/>
    </location>
</feature>
<feature type="domain" description="S4 RNA-binding" evidence="1">
    <location>
        <begin position="338"/>
        <end position="396"/>
    </location>
</feature>
<feature type="short sequence motif" description="'HIGH' region">
    <location>
        <begin position="43"/>
        <end position="52"/>
    </location>
</feature>
<feature type="short sequence motif" description="'KMSKS' region">
    <location>
        <begin position="227"/>
        <end position="231"/>
    </location>
</feature>
<feature type="binding site" evidence="1">
    <location>
        <position position="230"/>
    </location>
    <ligand>
        <name>ATP</name>
        <dbReference type="ChEBI" id="CHEBI:30616"/>
    </ligand>
</feature>
<keyword id="KW-0030">Aminoacyl-tRNA synthetase</keyword>
<keyword id="KW-0067">ATP-binding</keyword>
<keyword id="KW-0963">Cytoplasm</keyword>
<keyword id="KW-0436">Ligase</keyword>
<keyword id="KW-0547">Nucleotide-binding</keyword>
<keyword id="KW-0648">Protein biosynthesis</keyword>
<keyword id="KW-0694">RNA-binding</keyword>
<accession>Q3ZX03</accession>
<evidence type="ECO:0000255" key="1">
    <source>
        <dbReference type="HAMAP-Rule" id="MF_02007"/>
    </source>
</evidence>
<dbReference type="EC" id="6.1.1.1" evidence="1"/>
<dbReference type="EMBL" id="AJ965256">
    <property type="protein sequence ID" value="CAI82764.1"/>
    <property type="molecule type" value="Genomic_DNA"/>
</dbReference>
<dbReference type="RefSeq" id="WP_011309115.1">
    <property type="nucleotide sequence ID" value="NC_007356.1"/>
</dbReference>
<dbReference type="SMR" id="Q3ZX03"/>
<dbReference type="KEGG" id="deh:cbdbA583"/>
<dbReference type="HOGENOM" id="CLU_024003_5_0_0"/>
<dbReference type="Proteomes" id="UP000000433">
    <property type="component" value="Chromosome"/>
</dbReference>
<dbReference type="GO" id="GO:0005829">
    <property type="term" value="C:cytosol"/>
    <property type="evidence" value="ECO:0007669"/>
    <property type="project" value="TreeGrafter"/>
</dbReference>
<dbReference type="GO" id="GO:0005524">
    <property type="term" value="F:ATP binding"/>
    <property type="evidence" value="ECO:0007669"/>
    <property type="project" value="UniProtKB-UniRule"/>
</dbReference>
<dbReference type="GO" id="GO:0003723">
    <property type="term" value="F:RNA binding"/>
    <property type="evidence" value="ECO:0007669"/>
    <property type="project" value="UniProtKB-KW"/>
</dbReference>
<dbReference type="GO" id="GO:0004831">
    <property type="term" value="F:tyrosine-tRNA ligase activity"/>
    <property type="evidence" value="ECO:0007669"/>
    <property type="project" value="UniProtKB-UniRule"/>
</dbReference>
<dbReference type="GO" id="GO:0006437">
    <property type="term" value="P:tyrosyl-tRNA aminoacylation"/>
    <property type="evidence" value="ECO:0007669"/>
    <property type="project" value="UniProtKB-UniRule"/>
</dbReference>
<dbReference type="CDD" id="cd00165">
    <property type="entry name" value="S4"/>
    <property type="match status" value="1"/>
</dbReference>
<dbReference type="CDD" id="cd00805">
    <property type="entry name" value="TyrRS_core"/>
    <property type="match status" value="1"/>
</dbReference>
<dbReference type="FunFam" id="3.40.50.620:FF:000061">
    <property type="entry name" value="Tyrosine--tRNA ligase"/>
    <property type="match status" value="1"/>
</dbReference>
<dbReference type="Gene3D" id="3.40.50.620">
    <property type="entry name" value="HUPs"/>
    <property type="match status" value="1"/>
</dbReference>
<dbReference type="Gene3D" id="3.10.290.10">
    <property type="entry name" value="RNA-binding S4 domain"/>
    <property type="match status" value="1"/>
</dbReference>
<dbReference type="Gene3D" id="1.10.240.10">
    <property type="entry name" value="Tyrosyl-Transfer RNA Synthetase"/>
    <property type="match status" value="1"/>
</dbReference>
<dbReference type="HAMAP" id="MF_02007">
    <property type="entry name" value="Tyr_tRNA_synth_type2"/>
    <property type="match status" value="1"/>
</dbReference>
<dbReference type="InterPro" id="IPR001412">
    <property type="entry name" value="aa-tRNA-synth_I_CS"/>
</dbReference>
<dbReference type="InterPro" id="IPR002305">
    <property type="entry name" value="aa-tRNA-synth_Ic"/>
</dbReference>
<dbReference type="InterPro" id="IPR014729">
    <property type="entry name" value="Rossmann-like_a/b/a_fold"/>
</dbReference>
<dbReference type="InterPro" id="IPR002942">
    <property type="entry name" value="S4_RNA-bd"/>
</dbReference>
<dbReference type="InterPro" id="IPR036986">
    <property type="entry name" value="S4_RNA-bd_sf"/>
</dbReference>
<dbReference type="InterPro" id="IPR054608">
    <property type="entry name" value="SYY-like_C"/>
</dbReference>
<dbReference type="InterPro" id="IPR002307">
    <property type="entry name" value="Tyr-tRNA-ligase"/>
</dbReference>
<dbReference type="InterPro" id="IPR024088">
    <property type="entry name" value="Tyr-tRNA-ligase_bac-type"/>
</dbReference>
<dbReference type="InterPro" id="IPR024108">
    <property type="entry name" value="Tyr-tRNA-ligase_bac_2"/>
</dbReference>
<dbReference type="NCBIfam" id="TIGR00234">
    <property type="entry name" value="tyrS"/>
    <property type="match status" value="1"/>
</dbReference>
<dbReference type="PANTHER" id="PTHR11766:SF1">
    <property type="entry name" value="TYROSINE--TRNA LIGASE"/>
    <property type="match status" value="1"/>
</dbReference>
<dbReference type="PANTHER" id="PTHR11766">
    <property type="entry name" value="TYROSYL-TRNA SYNTHETASE"/>
    <property type="match status" value="1"/>
</dbReference>
<dbReference type="Pfam" id="PF22421">
    <property type="entry name" value="SYY_C-terminal"/>
    <property type="match status" value="1"/>
</dbReference>
<dbReference type="Pfam" id="PF00579">
    <property type="entry name" value="tRNA-synt_1b"/>
    <property type="match status" value="1"/>
</dbReference>
<dbReference type="PRINTS" id="PR01040">
    <property type="entry name" value="TRNASYNTHTYR"/>
</dbReference>
<dbReference type="SMART" id="SM00363">
    <property type="entry name" value="S4"/>
    <property type="match status" value="1"/>
</dbReference>
<dbReference type="SUPFAM" id="SSF55174">
    <property type="entry name" value="Alpha-L RNA-binding motif"/>
    <property type="match status" value="1"/>
</dbReference>
<dbReference type="SUPFAM" id="SSF52374">
    <property type="entry name" value="Nucleotidylyl transferase"/>
    <property type="match status" value="1"/>
</dbReference>
<dbReference type="PROSITE" id="PS00178">
    <property type="entry name" value="AA_TRNA_LIGASE_I"/>
    <property type="match status" value="1"/>
</dbReference>
<dbReference type="PROSITE" id="PS50889">
    <property type="entry name" value="S4"/>
    <property type="match status" value="1"/>
</dbReference>
<sequence>MNQSENQIDQILKRGVAEVIVEEDFKKLLLSGRKLRLKEGFDPSSPDIHLGHMVALRKLRQLQDLGHQVVLIVGDWTAQIGDPSGASVTRPMLSAEQVKANAKTYLEQFFKIVDKDKTEVRWQSEWYGNFKLEDVVRLSSKFTVAQMLARDDFAKRYAAGKPISVTELLYPMLQAYDSVMVKSDVEFGGTDQKFNLLVGRELQEMVGQKPQQVLMVPILVGTDGVHKMSKSLGNYIGVAEDPSEIFGKCMSIPDELILQYFELVTDIPDQEIADFKAQMENGQVNPMILKKRLASELLTQLYNATAAQEADARFTRVVQRGEIPEDMPECRLENGQNTGVIDFIILSGLAKSKSEARRLLEQGAVEINSEKISDQNTPVKCGDIIKAGKRRYSKAI</sequence>
<gene>
    <name evidence="1" type="primary">tyrS</name>
    <name type="ordered locus">cbdbA583</name>
</gene>
<protein>
    <recommendedName>
        <fullName evidence="1">Tyrosine--tRNA ligase</fullName>
        <ecNumber evidence="1">6.1.1.1</ecNumber>
    </recommendedName>
    <alternativeName>
        <fullName evidence="1">Tyrosyl-tRNA synthetase</fullName>
        <shortName evidence="1">TyrRS</shortName>
    </alternativeName>
</protein>
<organism>
    <name type="scientific">Dehalococcoides mccartyi (strain CBDB1)</name>
    <dbReference type="NCBI Taxonomy" id="255470"/>
    <lineage>
        <taxon>Bacteria</taxon>
        <taxon>Bacillati</taxon>
        <taxon>Chloroflexota</taxon>
        <taxon>Dehalococcoidia</taxon>
        <taxon>Dehalococcoidales</taxon>
        <taxon>Dehalococcoidaceae</taxon>
        <taxon>Dehalococcoides</taxon>
    </lineage>
</organism>
<proteinExistence type="inferred from homology"/>